<evidence type="ECO:0000250" key="1"/>
<evidence type="ECO:0000255" key="2">
    <source>
        <dbReference type="PROSITE-ProRule" id="PRU10101"/>
    </source>
</evidence>
<evidence type="ECO:0000269" key="3">
    <source>
    </source>
</evidence>
<evidence type="ECO:0000269" key="4">
    <source>
    </source>
</evidence>
<evidence type="ECO:0000305" key="5"/>
<evidence type="ECO:0000305" key="6">
    <source>
    </source>
</evidence>
<proteinExistence type="evidence at protein level"/>
<name>BLC4_SALTM</name>
<keyword id="KW-0046">Antibiotic resistance</keyword>
<keyword id="KW-0378">Hydrolase</keyword>
<keyword id="KW-0614">Plasmid</keyword>
<keyword id="KW-0732">Signal</keyword>
<sequence>MMTQSIRRSMLTVMATLPLLFSSATLHAQANSVQQQLEALEKSSGGRLGVAQINTADNSQILYVADERFAMCSTSKVMAAAAVLKQSESDKHLLNQRVEIRASDLVNYNPIAEKHVNGTMTLAELGAGALQYSDNTAMNKLIAHLGGPDKVTAFARSLGDETFRLDRTEPTLNSAIPGDPRDTTTPLAMAQTLKNLTLGKALAETQRAQLVTWLKGNTTGSASIRAGMPKSWGVGDKTGSGDYGTTNDIAVIWPENHAPLVLVTYFTQPEQKAESRRDILAAAAKIVTHGF</sequence>
<organism>
    <name type="scientific">Salmonella typhimurium</name>
    <dbReference type="NCBI Taxonomy" id="90371"/>
    <lineage>
        <taxon>Bacteria</taxon>
        <taxon>Pseudomonadati</taxon>
        <taxon>Pseudomonadota</taxon>
        <taxon>Gammaproteobacteria</taxon>
        <taxon>Enterobacterales</taxon>
        <taxon>Enterobacteriaceae</taxon>
        <taxon>Salmonella</taxon>
    </lineage>
</organism>
<gene>
    <name type="primary">bla</name>
</gene>
<reference key="1">
    <citation type="journal article" date="1998" name="Antimicrob. Agents Chemother.">
        <title>Sequence of the gene encoding a plasmid-mediated cefotaxime-hydrolyzing class A beta-lactamase (CTX-M-4): involvement of serine 237 in cephalosporin hydrolysis.</title>
        <authorList>
            <person name="Gazouli M."/>
            <person name="Tzelepi E."/>
            <person name="Sidorenko S.V."/>
            <person name="Tzouvelekis L.S."/>
        </authorList>
    </citation>
    <scope>NUCLEOTIDE SEQUENCE [GENOMIC DNA]</scope>
    <scope>MUTAGENESIS OF SER-240</scope>
</reference>
<reference key="2">
    <citation type="journal article" date="1991" name="Biochem. J.">
        <title>A standard numbering scheme for the class A beta-lactamases.</title>
        <authorList>
            <person name="Ambler R.P."/>
            <person name="Coulson A.F."/>
            <person name="Frere J.M."/>
            <person name="Ghuysen J.M."/>
            <person name="Joris B."/>
            <person name="Forsman M."/>
            <person name="Levesque R.C."/>
            <person name="Tiraby G."/>
            <person name="Waley S.G."/>
        </authorList>
    </citation>
    <scope>AMINO ACID NUMBERING SCHEME</scope>
</reference>
<reference key="3">
    <citation type="journal article" date="1998" name="FEMS Microbiol. Lett.">
        <title>Effect of substitution of Asn for Arg-276 in the cefotaxime-hydrolyzing class A beta-lactamase CTX-M-4.</title>
        <authorList>
            <person name="Gazouli M."/>
            <person name="Legakis N.J."/>
            <person name="Tzouvelekis L.S."/>
        </authorList>
    </citation>
    <scope>MUTAGENESIS OF ARG-277</scope>
</reference>
<accession>O33807</accession>
<dbReference type="EC" id="3.5.2.6"/>
<dbReference type="EMBL" id="Y14156">
    <property type="protein sequence ID" value="CAA74573.1"/>
    <property type="molecule type" value="Genomic_DNA"/>
</dbReference>
<dbReference type="RefSeq" id="WP_032489025.1">
    <property type="nucleotide sequence ID" value="NG_048990.1"/>
</dbReference>
<dbReference type="SMR" id="O33807"/>
<dbReference type="CARD" id="ARO:3001867">
    <property type="molecule name" value="CTX-M-4"/>
    <property type="mechanism identifier" value="ARO:0001004"/>
    <property type="mechanism name" value="antibiotic inactivation"/>
</dbReference>
<dbReference type="KEGG" id="ag:CAA74573"/>
<dbReference type="GO" id="GO:0008800">
    <property type="term" value="F:beta-lactamase activity"/>
    <property type="evidence" value="ECO:0007669"/>
    <property type="project" value="UniProtKB-EC"/>
</dbReference>
<dbReference type="GO" id="GO:0030655">
    <property type="term" value="P:beta-lactam antibiotic catabolic process"/>
    <property type="evidence" value="ECO:0007669"/>
    <property type="project" value="InterPro"/>
</dbReference>
<dbReference type="GO" id="GO:0046677">
    <property type="term" value="P:response to antibiotic"/>
    <property type="evidence" value="ECO:0007669"/>
    <property type="project" value="UniProtKB-KW"/>
</dbReference>
<dbReference type="Gene3D" id="3.40.710.10">
    <property type="entry name" value="DD-peptidase/beta-lactamase superfamily"/>
    <property type="match status" value="1"/>
</dbReference>
<dbReference type="InterPro" id="IPR012338">
    <property type="entry name" value="Beta-lactam/transpept-like"/>
</dbReference>
<dbReference type="InterPro" id="IPR045155">
    <property type="entry name" value="Beta-lactam_cat"/>
</dbReference>
<dbReference type="InterPro" id="IPR000871">
    <property type="entry name" value="Beta-lactam_class-A"/>
</dbReference>
<dbReference type="InterPro" id="IPR023650">
    <property type="entry name" value="Beta-lactam_class-A_AS"/>
</dbReference>
<dbReference type="NCBIfam" id="NF033103">
    <property type="entry name" value="bla_class_A"/>
    <property type="match status" value="1"/>
</dbReference>
<dbReference type="NCBIfam" id="NF033089">
    <property type="entry name" value="blaCTX-M"/>
    <property type="match status" value="1"/>
</dbReference>
<dbReference type="PANTHER" id="PTHR35333">
    <property type="entry name" value="BETA-LACTAMASE"/>
    <property type="match status" value="1"/>
</dbReference>
<dbReference type="PANTHER" id="PTHR35333:SF3">
    <property type="entry name" value="BETA-LACTAMASE-TYPE TRANSPEPTIDASE FOLD CONTAINING PROTEIN"/>
    <property type="match status" value="1"/>
</dbReference>
<dbReference type="Pfam" id="PF13354">
    <property type="entry name" value="Beta-lactamase2"/>
    <property type="match status" value="1"/>
</dbReference>
<dbReference type="PRINTS" id="PR00118">
    <property type="entry name" value="BLACTAMASEA"/>
</dbReference>
<dbReference type="SUPFAM" id="SSF56601">
    <property type="entry name" value="beta-lactamase/transpeptidase-like"/>
    <property type="match status" value="1"/>
</dbReference>
<dbReference type="PROSITE" id="PS00146">
    <property type="entry name" value="BETA_LACTAMASE_A"/>
    <property type="match status" value="1"/>
</dbReference>
<protein>
    <recommendedName>
        <fullName>Beta-lactamase CTX-M-4</fullName>
        <ecNumber>3.5.2.6</ecNumber>
    </recommendedName>
    <alternativeName>
        <fullName>Cefotaximase 4</fullName>
    </alternativeName>
</protein>
<comment type="function">
    <text>Has cefotaxime-hydrolyzing activity.</text>
</comment>
<comment type="catalytic activity">
    <reaction evidence="2">
        <text>a beta-lactam + H2O = a substituted beta-amino acid</text>
        <dbReference type="Rhea" id="RHEA:20401"/>
        <dbReference type="ChEBI" id="CHEBI:15377"/>
        <dbReference type="ChEBI" id="CHEBI:35627"/>
        <dbReference type="ChEBI" id="CHEBI:140347"/>
        <dbReference type="EC" id="3.5.2.6"/>
    </reaction>
</comment>
<comment type="miscellaneous">
    <text evidence="6">The class A beta-lactamase family has a specific amino-acid numbering system, sometimes called Ambler or ABL numbering and often misspelt as Amber. A multiple sequence alignment was used to derive a consensus sequence and then the consensus was numbered taking into account insertions and deletions. This allows use of identical numbers, e.g. for active site residues, despite differences in protein length. UniProt always uses natural numbering of residues, hence there appear to be differences in numbering between this entry and some papers.</text>
</comment>
<comment type="similarity">
    <text evidence="5">Belongs to the class-A beta-lactamase family.</text>
</comment>
<geneLocation type="plasmid">
    <name>pMSL</name>
</geneLocation>
<feature type="signal peptide" evidence="1">
    <location>
        <begin position="1"/>
        <end position="28"/>
    </location>
</feature>
<feature type="chain" id="PRO_0000016991" description="Beta-lactamase CTX-M-4">
    <location>
        <begin position="29"/>
        <end position="291"/>
    </location>
</feature>
<feature type="active site" description="Acyl-ester intermediate" evidence="2">
    <location>
        <position position="73"/>
    </location>
</feature>
<feature type="binding site" evidence="1">
    <location>
        <begin position="237"/>
        <end position="239"/>
    </location>
    <ligand>
        <name>substrate</name>
    </ligand>
</feature>
<feature type="mutagenesis site" description="Causes minor alterations in the interaction of with beta-lactams, reduces slightly the relative hydrolytic activity against cefotaxime and the susceptibility to inhibition by clavulanate." evidence="3">
    <original>S</original>
    <variation>A</variation>
    <location>
        <position position="240"/>
    </location>
</feature>
<feature type="mutagenesis site" description="Confers lower levels of resistance to cefotaxime, ceftriaxone and aztreonam while the levels of resistance to penicillins and penicillin-inhibitor combinations are similar. Slightly less susceptible to inhibition by clavulanate and tazobactam. Cause a 3-fold reduction in the relative rate of hydrolysis of cefotaxime." evidence="4">
    <original>R</original>
    <variation>N</variation>
    <location>
        <position position="277"/>
    </location>
</feature>